<gene>
    <name evidence="1" type="primary">prmB</name>
    <name type="ordered locus">PD_0606</name>
</gene>
<name>PRMB_XYLFT</name>
<protein>
    <recommendedName>
        <fullName evidence="1">Ribosomal protein uL3 glutamine methyltransferase</fullName>
        <shortName evidence="1">uL3 MTase</shortName>
        <ecNumber evidence="1">2.1.1.298</ecNumber>
    </recommendedName>
    <alternativeName>
        <fullName evidence="1">N5-glutamine methyltransferase PrmB</fullName>
    </alternativeName>
</protein>
<keyword id="KW-0489">Methyltransferase</keyword>
<keyword id="KW-1185">Reference proteome</keyword>
<keyword id="KW-0949">S-adenosyl-L-methionine</keyword>
<keyword id="KW-0808">Transferase</keyword>
<evidence type="ECO:0000255" key="1">
    <source>
        <dbReference type="HAMAP-Rule" id="MF_02125"/>
    </source>
</evidence>
<feature type="chain" id="PRO_0000088014" description="Ribosomal protein uL3 glutamine methyltransferase">
    <location>
        <begin position="1"/>
        <end position="312"/>
    </location>
</feature>
<accession>Q87DS5</accession>
<reference key="1">
    <citation type="journal article" date="2003" name="J. Bacteriol.">
        <title>Comparative analyses of the complete genome sequences of Pierce's disease and citrus variegated chlorosis strains of Xylella fastidiosa.</title>
        <authorList>
            <person name="Van Sluys M.A."/>
            <person name="de Oliveira M.C."/>
            <person name="Monteiro-Vitorello C.B."/>
            <person name="Miyaki C.Y."/>
            <person name="Furlan L.R."/>
            <person name="Camargo L.E.A."/>
            <person name="da Silva A.C.R."/>
            <person name="Moon D.H."/>
            <person name="Takita M.A."/>
            <person name="Lemos E.G.M."/>
            <person name="Machado M.A."/>
            <person name="Ferro M.I.T."/>
            <person name="da Silva F.R."/>
            <person name="Goldman M.H.S."/>
            <person name="Goldman G.H."/>
            <person name="Lemos M.V.F."/>
            <person name="El-Dorry H."/>
            <person name="Tsai S.M."/>
            <person name="Carrer H."/>
            <person name="Carraro D.M."/>
            <person name="de Oliveira R.C."/>
            <person name="Nunes L.R."/>
            <person name="Siqueira W.J."/>
            <person name="Coutinho L.L."/>
            <person name="Kimura E.T."/>
            <person name="Ferro E.S."/>
            <person name="Harakava R."/>
            <person name="Kuramae E.E."/>
            <person name="Marino C.L."/>
            <person name="Giglioti E."/>
            <person name="Abreu I.L."/>
            <person name="Alves L.M.C."/>
            <person name="do Amaral A.M."/>
            <person name="Baia G.S."/>
            <person name="Blanco S.R."/>
            <person name="Brito M.S."/>
            <person name="Cannavan F.S."/>
            <person name="Celestino A.V."/>
            <person name="da Cunha A.F."/>
            <person name="Fenille R.C."/>
            <person name="Ferro J.A."/>
            <person name="Formighieri E.F."/>
            <person name="Kishi L.T."/>
            <person name="Leoni S.G."/>
            <person name="Oliveira A.R."/>
            <person name="Rosa V.E. Jr."/>
            <person name="Sassaki F.T."/>
            <person name="Sena J.A.D."/>
            <person name="de Souza A.A."/>
            <person name="Truffi D."/>
            <person name="Tsukumo F."/>
            <person name="Yanai G.M."/>
            <person name="Zaros L.G."/>
            <person name="Civerolo E.L."/>
            <person name="Simpson A.J.G."/>
            <person name="Almeida N.F. Jr."/>
            <person name="Setubal J.C."/>
            <person name="Kitajima J.P."/>
        </authorList>
    </citation>
    <scope>NUCLEOTIDE SEQUENCE [LARGE SCALE GENOMIC DNA]</scope>
    <source>
        <strain>Temecula1 / ATCC 700964</strain>
    </source>
</reference>
<comment type="function">
    <text evidence="1">Methylates large ribosomal subunit protein uL3 on a specific glutamine residue.</text>
</comment>
<comment type="catalytic activity">
    <reaction evidence="1">
        <text>L-glutaminyl-[ribosomal protein uL3] + S-adenosyl-L-methionine = N(5)-methyl-L-glutaminyl-[ribosomal protein uL3] + S-adenosyl-L-homocysteine + H(+)</text>
        <dbReference type="Rhea" id="RHEA:45020"/>
        <dbReference type="Rhea" id="RHEA-COMP:11063"/>
        <dbReference type="Rhea" id="RHEA-COMP:11064"/>
        <dbReference type="ChEBI" id="CHEBI:15378"/>
        <dbReference type="ChEBI" id="CHEBI:30011"/>
        <dbReference type="ChEBI" id="CHEBI:57856"/>
        <dbReference type="ChEBI" id="CHEBI:59789"/>
        <dbReference type="ChEBI" id="CHEBI:61891"/>
        <dbReference type="EC" id="2.1.1.298"/>
    </reaction>
</comment>
<comment type="similarity">
    <text evidence="1">Belongs to the protein N5-glutamine methyltransferase family. PrmB subfamily.</text>
</comment>
<sequence>MAVAMTPAAADELHTIVDLIRYGASRFSEAGLTFGHSYDNALDEATQLVLHALHLPPDLGPAYGQARLLRTEKECVLALFERRVTERVPVAYLTGDAWFAGLNFKSDARALVPRSPIAELIQAGFEPWLAGRDVRHALDLCTGSGCIAIAMGHYNPHWRVDGSDISEDALSLALENKVRLLAHNVELIKSDVFAGLVGRRYQLIVSNPPYVTDAETDALPQEYGYEPELGLRAGPDGLNLVLKILRDAPAHLDEEGLLICEVGESEQQLVQLLPQVDFAWVEFKVGQMGVFAVECRELIAHHDRIAALAAER</sequence>
<organism>
    <name type="scientific">Xylella fastidiosa (strain Temecula1 / ATCC 700964)</name>
    <dbReference type="NCBI Taxonomy" id="183190"/>
    <lineage>
        <taxon>Bacteria</taxon>
        <taxon>Pseudomonadati</taxon>
        <taxon>Pseudomonadota</taxon>
        <taxon>Gammaproteobacteria</taxon>
        <taxon>Lysobacterales</taxon>
        <taxon>Lysobacteraceae</taxon>
        <taxon>Xylella</taxon>
    </lineage>
</organism>
<proteinExistence type="inferred from homology"/>
<dbReference type="EC" id="2.1.1.298" evidence="1"/>
<dbReference type="EMBL" id="AE009442">
    <property type="protein sequence ID" value="AAO28478.1"/>
    <property type="molecule type" value="Genomic_DNA"/>
</dbReference>
<dbReference type="SMR" id="Q87DS5"/>
<dbReference type="KEGG" id="xft:PD_0606"/>
<dbReference type="HOGENOM" id="CLU_018398_5_1_6"/>
<dbReference type="Proteomes" id="UP000002516">
    <property type="component" value="Chromosome"/>
</dbReference>
<dbReference type="GO" id="GO:0005829">
    <property type="term" value="C:cytosol"/>
    <property type="evidence" value="ECO:0007669"/>
    <property type="project" value="TreeGrafter"/>
</dbReference>
<dbReference type="GO" id="GO:0003676">
    <property type="term" value="F:nucleic acid binding"/>
    <property type="evidence" value="ECO:0007669"/>
    <property type="project" value="InterPro"/>
</dbReference>
<dbReference type="GO" id="GO:0036009">
    <property type="term" value="F:protein-glutamine N-methyltransferase activity"/>
    <property type="evidence" value="ECO:0007669"/>
    <property type="project" value="UniProtKB-UniRule"/>
</dbReference>
<dbReference type="GO" id="GO:0032259">
    <property type="term" value="P:methylation"/>
    <property type="evidence" value="ECO:0007669"/>
    <property type="project" value="UniProtKB-KW"/>
</dbReference>
<dbReference type="CDD" id="cd02440">
    <property type="entry name" value="AdoMet_MTases"/>
    <property type="match status" value="1"/>
</dbReference>
<dbReference type="Gene3D" id="1.10.8.10">
    <property type="entry name" value="DNA helicase RuvA subunit, C-terminal domain"/>
    <property type="match status" value="1"/>
</dbReference>
<dbReference type="Gene3D" id="3.40.50.150">
    <property type="entry name" value="Vaccinia Virus protein VP39"/>
    <property type="match status" value="1"/>
</dbReference>
<dbReference type="HAMAP" id="MF_02125">
    <property type="entry name" value="L3_methyltr_PrmB"/>
    <property type="match status" value="1"/>
</dbReference>
<dbReference type="InterPro" id="IPR002052">
    <property type="entry name" value="DNA_methylase_N6_adenine_CS"/>
</dbReference>
<dbReference type="InterPro" id="IPR004556">
    <property type="entry name" value="HemK-like"/>
</dbReference>
<dbReference type="InterPro" id="IPR017127">
    <property type="entry name" value="Ribosome_uL3_MTase"/>
</dbReference>
<dbReference type="InterPro" id="IPR029063">
    <property type="entry name" value="SAM-dependent_MTases_sf"/>
</dbReference>
<dbReference type="InterPro" id="IPR007848">
    <property type="entry name" value="Small_mtfrase_dom"/>
</dbReference>
<dbReference type="NCBIfam" id="TIGR00536">
    <property type="entry name" value="hemK_fam"/>
    <property type="match status" value="1"/>
</dbReference>
<dbReference type="NCBIfam" id="TIGR03533">
    <property type="entry name" value="L3_gln_methyl"/>
    <property type="match status" value="1"/>
</dbReference>
<dbReference type="PANTHER" id="PTHR47806">
    <property type="entry name" value="50S RIBOSOMAL PROTEIN L3 GLUTAMINE METHYLTRANSFERASE"/>
    <property type="match status" value="1"/>
</dbReference>
<dbReference type="PANTHER" id="PTHR47806:SF1">
    <property type="entry name" value="RIBOSOMAL PROTEIN UL3 GLUTAMINE METHYLTRANSFERASE"/>
    <property type="match status" value="1"/>
</dbReference>
<dbReference type="Pfam" id="PF05175">
    <property type="entry name" value="MTS"/>
    <property type="match status" value="1"/>
</dbReference>
<dbReference type="PIRSF" id="PIRSF037167">
    <property type="entry name" value="Mtase_YfcB_prd"/>
    <property type="match status" value="1"/>
</dbReference>
<dbReference type="SUPFAM" id="SSF53335">
    <property type="entry name" value="S-adenosyl-L-methionine-dependent methyltransferases"/>
    <property type="match status" value="1"/>
</dbReference>